<comment type="function">
    <text evidence="1">One of the primary rRNA binding proteins, it binds directly near the 3'-end of the 23S rRNA, where it nucleates assembly of the 50S subunit.</text>
</comment>
<comment type="subunit">
    <text evidence="1">Part of the 50S ribosomal subunit. Forms a cluster with proteins L14 and L19.</text>
</comment>
<comment type="similarity">
    <text evidence="1">Belongs to the universal ribosomal protein uL3 family.</text>
</comment>
<dbReference type="EMBL" id="CP001107">
    <property type="protein sequence ID" value="ACR74209.1"/>
    <property type="molecule type" value="Genomic_DNA"/>
</dbReference>
<dbReference type="RefSeq" id="WP_012741327.1">
    <property type="nucleotide sequence ID" value="NZ_CAXSYD010000003.1"/>
</dbReference>
<dbReference type="SMR" id="C4ZBD4"/>
<dbReference type="STRING" id="515619.EUBREC_0418"/>
<dbReference type="PaxDb" id="515619-EUBREC_0418"/>
<dbReference type="GeneID" id="86987328"/>
<dbReference type="KEGG" id="ere:EUBREC_0418"/>
<dbReference type="HOGENOM" id="CLU_044142_4_1_9"/>
<dbReference type="Proteomes" id="UP000001477">
    <property type="component" value="Chromosome"/>
</dbReference>
<dbReference type="GO" id="GO:0022625">
    <property type="term" value="C:cytosolic large ribosomal subunit"/>
    <property type="evidence" value="ECO:0007669"/>
    <property type="project" value="TreeGrafter"/>
</dbReference>
<dbReference type="GO" id="GO:0019843">
    <property type="term" value="F:rRNA binding"/>
    <property type="evidence" value="ECO:0007669"/>
    <property type="project" value="UniProtKB-UniRule"/>
</dbReference>
<dbReference type="GO" id="GO:0003735">
    <property type="term" value="F:structural constituent of ribosome"/>
    <property type="evidence" value="ECO:0007669"/>
    <property type="project" value="InterPro"/>
</dbReference>
<dbReference type="GO" id="GO:0006412">
    <property type="term" value="P:translation"/>
    <property type="evidence" value="ECO:0007669"/>
    <property type="project" value="UniProtKB-UniRule"/>
</dbReference>
<dbReference type="FunFam" id="2.40.30.10:FF:000004">
    <property type="entry name" value="50S ribosomal protein L3"/>
    <property type="match status" value="1"/>
</dbReference>
<dbReference type="Gene3D" id="3.30.160.810">
    <property type="match status" value="1"/>
</dbReference>
<dbReference type="Gene3D" id="2.40.30.10">
    <property type="entry name" value="Translation factors"/>
    <property type="match status" value="1"/>
</dbReference>
<dbReference type="HAMAP" id="MF_01325_B">
    <property type="entry name" value="Ribosomal_uL3_B"/>
    <property type="match status" value="1"/>
</dbReference>
<dbReference type="InterPro" id="IPR000597">
    <property type="entry name" value="Ribosomal_uL3"/>
</dbReference>
<dbReference type="InterPro" id="IPR019927">
    <property type="entry name" value="Ribosomal_uL3_bac/org-type"/>
</dbReference>
<dbReference type="InterPro" id="IPR019926">
    <property type="entry name" value="Ribosomal_uL3_CS"/>
</dbReference>
<dbReference type="InterPro" id="IPR009000">
    <property type="entry name" value="Transl_B-barrel_sf"/>
</dbReference>
<dbReference type="NCBIfam" id="TIGR03625">
    <property type="entry name" value="L3_bact"/>
    <property type="match status" value="1"/>
</dbReference>
<dbReference type="PANTHER" id="PTHR11229">
    <property type="entry name" value="50S RIBOSOMAL PROTEIN L3"/>
    <property type="match status" value="1"/>
</dbReference>
<dbReference type="PANTHER" id="PTHR11229:SF16">
    <property type="entry name" value="LARGE RIBOSOMAL SUBUNIT PROTEIN UL3C"/>
    <property type="match status" value="1"/>
</dbReference>
<dbReference type="Pfam" id="PF00297">
    <property type="entry name" value="Ribosomal_L3"/>
    <property type="match status" value="1"/>
</dbReference>
<dbReference type="SUPFAM" id="SSF50447">
    <property type="entry name" value="Translation proteins"/>
    <property type="match status" value="1"/>
</dbReference>
<dbReference type="PROSITE" id="PS00474">
    <property type="entry name" value="RIBOSOMAL_L3"/>
    <property type="match status" value="1"/>
</dbReference>
<feature type="chain" id="PRO_1000214508" description="Large ribosomal subunit protein uL3">
    <location>
        <begin position="1"/>
        <end position="227"/>
    </location>
</feature>
<feature type="region of interest" description="Disordered" evidence="2">
    <location>
        <begin position="146"/>
        <end position="167"/>
    </location>
</feature>
<accession>C4ZBD4</accession>
<sequence length="227" mass="24267">MKKAILATKIGMTQIFNADGVLVPVTVLEAGPCVVTQIKTVENDGYSAVQVGFGDKKEKVVEKDANGKKSVAHRHGVNKAQMGHFKKAGVSGKRFVREFKFENADEYNLADEIKADIFAEGDKVDVTAISKGKGFQGAIKRLGQHRGPMAHGSKFHRHQGSNGACSSPSKVFKGKGMPGHMGSVKVTTQNLEVVRVDADKNLLLIKGAVPGAKKALITVKETTKSGK</sequence>
<protein>
    <recommendedName>
        <fullName evidence="1">Large ribosomal subunit protein uL3</fullName>
    </recommendedName>
    <alternativeName>
        <fullName evidence="3">50S ribosomal protein L3</fullName>
    </alternativeName>
</protein>
<evidence type="ECO:0000255" key="1">
    <source>
        <dbReference type="HAMAP-Rule" id="MF_01325"/>
    </source>
</evidence>
<evidence type="ECO:0000256" key="2">
    <source>
        <dbReference type="SAM" id="MobiDB-lite"/>
    </source>
</evidence>
<evidence type="ECO:0000305" key="3"/>
<gene>
    <name evidence="1" type="primary">rplC</name>
    <name type="ordered locus">EUBREC_0418</name>
</gene>
<proteinExistence type="inferred from homology"/>
<keyword id="KW-0687">Ribonucleoprotein</keyword>
<keyword id="KW-0689">Ribosomal protein</keyword>
<keyword id="KW-0694">RNA-binding</keyword>
<keyword id="KW-0699">rRNA-binding</keyword>
<organism>
    <name type="scientific">Agathobacter rectalis (strain ATCC 33656 / DSM 3377 / JCM 17463 / KCTC 5835 / VPI 0990)</name>
    <name type="common">Eubacterium rectale</name>
    <dbReference type="NCBI Taxonomy" id="515619"/>
    <lineage>
        <taxon>Bacteria</taxon>
        <taxon>Bacillati</taxon>
        <taxon>Bacillota</taxon>
        <taxon>Clostridia</taxon>
        <taxon>Lachnospirales</taxon>
        <taxon>Lachnospiraceae</taxon>
        <taxon>Agathobacter</taxon>
    </lineage>
</organism>
<reference key="1">
    <citation type="journal article" date="2009" name="Proc. Natl. Acad. Sci. U.S.A.">
        <title>Characterizing a model human gut microbiota composed of members of its two dominant bacterial phyla.</title>
        <authorList>
            <person name="Mahowald M.A."/>
            <person name="Rey F.E."/>
            <person name="Seedorf H."/>
            <person name="Turnbaugh P.J."/>
            <person name="Fulton R.S."/>
            <person name="Wollam A."/>
            <person name="Shah N."/>
            <person name="Wang C."/>
            <person name="Magrini V."/>
            <person name="Wilson R.K."/>
            <person name="Cantarel B.L."/>
            <person name="Coutinho P.M."/>
            <person name="Henrissat B."/>
            <person name="Crock L.W."/>
            <person name="Russell A."/>
            <person name="Verberkmoes N.C."/>
            <person name="Hettich R.L."/>
            <person name="Gordon J.I."/>
        </authorList>
    </citation>
    <scope>NUCLEOTIDE SEQUENCE [LARGE SCALE GENOMIC DNA]</scope>
    <source>
        <strain>ATCC 33656 / DSM 3377 / JCM 17463 / KCTC 5835 / LMG 30912 / VPI 0990</strain>
    </source>
</reference>
<name>RL3_AGARV</name>